<accession>O93853</accession>
<feature type="transit peptide" description="Mitochondrion" evidence="3">
    <location>
        <begin position="1"/>
        <end status="unknown"/>
    </location>
</feature>
<feature type="chain" id="PRO_0000001717" description="Alternative oxidase 1, mitochondrial">
    <location>
        <begin status="unknown"/>
        <end position="379"/>
    </location>
</feature>
<feature type="transmembrane region" description="Helical" evidence="3">
    <location>
        <begin position="234"/>
        <end position="256"/>
    </location>
</feature>
<feature type="region of interest" description="Disordered" evidence="4">
    <location>
        <begin position="33"/>
        <end position="76"/>
    </location>
</feature>
<feature type="compositionally biased region" description="Low complexity" evidence="4">
    <location>
        <begin position="33"/>
        <end position="50"/>
    </location>
</feature>
<feature type="binding site" evidence="2">
    <location>
        <position position="180"/>
    </location>
    <ligand>
        <name>Fe cation</name>
        <dbReference type="ChEBI" id="CHEBI:24875"/>
        <label>1</label>
    </ligand>
</feature>
<feature type="binding site" evidence="3">
    <location>
        <position position="180"/>
    </location>
    <ligand>
        <name>Fe cation</name>
        <dbReference type="ChEBI" id="CHEBI:24875"/>
    </ligand>
</feature>
<feature type="binding site" evidence="2">
    <location>
        <position position="219"/>
    </location>
    <ligand>
        <name>Fe cation</name>
        <dbReference type="ChEBI" id="CHEBI:24875"/>
        <label>1</label>
    </ligand>
</feature>
<feature type="binding site" evidence="2">
    <location>
        <position position="219"/>
    </location>
    <ligand>
        <name>Fe cation</name>
        <dbReference type="ChEBI" id="CHEBI:24875"/>
        <label>2</label>
    </ligand>
</feature>
<feature type="binding site" evidence="3">
    <location>
        <position position="219"/>
    </location>
    <ligand>
        <name>Fe cation</name>
        <dbReference type="ChEBI" id="CHEBI:24875"/>
    </ligand>
</feature>
<feature type="binding site" evidence="2">
    <location>
        <position position="222"/>
    </location>
    <ligand>
        <name>Fe cation</name>
        <dbReference type="ChEBI" id="CHEBI:24875"/>
        <label>1</label>
    </ligand>
</feature>
<feature type="binding site" evidence="3">
    <location>
        <position position="222"/>
    </location>
    <ligand>
        <name>Fe cation</name>
        <dbReference type="ChEBI" id="CHEBI:24875"/>
    </ligand>
</feature>
<feature type="binding site" evidence="2">
    <location>
        <position position="270"/>
    </location>
    <ligand>
        <name>Fe cation</name>
        <dbReference type="ChEBI" id="CHEBI:24875"/>
        <label>2</label>
    </ligand>
</feature>
<feature type="binding site" evidence="3">
    <location>
        <position position="271"/>
    </location>
    <ligand>
        <name>Fe cation</name>
        <dbReference type="ChEBI" id="CHEBI:24875"/>
    </ligand>
</feature>
<feature type="binding site" evidence="2">
    <location>
        <position position="326"/>
    </location>
    <ligand>
        <name>Fe cation</name>
        <dbReference type="ChEBI" id="CHEBI:24875"/>
        <label>1</label>
    </ligand>
</feature>
<feature type="binding site" evidence="2">
    <location>
        <position position="326"/>
    </location>
    <ligand>
        <name>Fe cation</name>
        <dbReference type="ChEBI" id="CHEBI:24875"/>
        <label>2</label>
    </ligand>
</feature>
<feature type="binding site" evidence="3">
    <location>
        <position position="326"/>
    </location>
    <ligand>
        <name>Fe cation</name>
        <dbReference type="ChEBI" id="CHEBI:24875"/>
    </ligand>
</feature>
<feature type="binding site" evidence="2">
    <location>
        <position position="329"/>
    </location>
    <ligand>
        <name>Fe cation</name>
        <dbReference type="ChEBI" id="CHEBI:24875"/>
        <label>2</label>
    </ligand>
</feature>
<feature type="binding site" evidence="3">
    <location>
        <position position="329"/>
    </location>
    <ligand>
        <name>Fe cation</name>
        <dbReference type="ChEBI" id="CHEBI:24875"/>
    </ligand>
</feature>
<gene>
    <name type="primary">AOX1</name>
    <name type="synonym">AOX1A</name>
</gene>
<comment type="function">
    <text evidence="1">Catalyzes cyanide-resistant oxygen consumption. May increase respiration when the cytochrome respiratory pathway is restricted, or in response to low temperatures (By similarity).</text>
</comment>
<comment type="cofactor">
    <cofactor evidence="2">
        <name>Fe cation</name>
        <dbReference type="ChEBI" id="CHEBI:24875"/>
    </cofactor>
    <text evidence="2">Binds 2 iron ions per subunit.</text>
</comment>
<comment type="subcellular location">
    <subcellularLocation>
        <location evidence="1">Mitochondrion inner membrane</location>
        <topology evidence="1">Single-pass membrane protein</topology>
        <orientation evidence="1">Matrix side</orientation>
    </subcellularLocation>
    <text evidence="1">Possibly in the inner surface of the inner mitochondrial membrane.</text>
</comment>
<comment type="similarity">
    <text evidence="5">Belongs to the alternative oxidase family.</text>
</comment>
<dbReference type="EC" id="1.-.-.-"/>
<dbReference type="EMBL" id="AF031229">
    <property type="protein sequence ID" value="AAC98914.1"/>
    <property type="molecule type" value="Genomic_DNA"/>
</dbReference>
<dbReference type="SMR" id="O93853"/>
<dbReference type="VEuPathDB" id="FungiDB:C1_09160W_A"/>
<dbReference type="VEuPathDB" id="FungiDB:CAWG_00513"/>
<dbReference type="GO" id="GO:0005743">
    <property type="term" value="C:mitochondrial inner membrane"/>
    <property type="evidence" value="ECO:0007669"/>
    <property type="project" value="UniProtKB-SubCell"/>
</dbReference>
<dbReference type="GO" id="GO:0009916">
    <property type="term" value="F:alternative oxidase activity"/>
    <property type="evidence" value="ECO:0007669"/>
    <property type="project" value="InterPro"/>
</dbReference>
<dbReference type="GO" id="GO:0046872">
    <property type="term" value="F:metal ion binding"/>
    <property type="evidence" value="ECO:0007669"/>
    <property type="project" value="UniProtKB-KW"/>
</dbReference>
<dbReference type="GO" id="GO:0010230">
    <property type="term" value="P:alternative respiration"/>
    <property type="evidence" value="ECO:0007669"/>
    <property type="project" value="TreeGrafter"/>
</dbReference>
<dbReference type="CDD" id="cd01053">
    <property type="entry name" value="AOX"/>
    <property type="match status" value="1"/>
</dbReference>
<dbReference type="FunFam" id="1.20.1260.140:FF:000002">
    <property type="entry name" value="Alternative oxidase"/>
    <property type="match status" value="1"/>
</dbReference>
<dbReference type="Gene3D" id="1.20.1260.140">
    <property type="entry name" value="Alternative oxidase"/>
    <property type="match status" value="1"/>
</dbReference>
<dbReference type="InterPro" id="IPR002680">
    <property type="entry name" value="AOX"/>
</dbReference>
<dbReference type="InterPro" id="IPR038659">
    <property type="entry name" value="AOX_sf"/>
</dbReference>
<dbReference type="PANTHER" id="PTHR31803">
    <property type="entry name" value="ALTERNATIVE OXIDASE"/>
    <property type="match status" value="1"/>
</dbReference>
<dbReference type="PANTHER" id="PTHR31803:SF3">
    <property type="entry name" value="ALTERNATIVE OXIDASE"/>
    <property type="match status" value="1"/>
</dbReference>
<dbReference type="Pfam" id="PF01786">
    <property type="entry name" value="AOX"/>
    <property type="match status" value="1"/>
</dbReference>
<dbReference type="PIRSF" id="PIRSF005229">
    <property type="entry name" value="AOX"/>
    <property type="match status" value="1"/>
</dbReference>
<reference key="1">
    <citation type="journal article" date="1999" name="J. Bacteriol.">
        <title>Molecular cloning and functional expression of alternative oxidase from Candida albicans.</title>
        <authorList>
            <person name="Huh W.-K."/>
            <person name="Kang S.-O."/>
        </authorList>
    </citation>
    <scope>NUCLEOTIDE SEQUENCE [GENOMIC DNA]</scope>
    <source>
        <strain>ATCC 10231 / CBS 6431 / CIP 48.72 / DSM 1386 / NBRC 1594</strain>
    </source>
</reference>
<protein>
    <recommendedName>
        <fullName>Alternative oxidase 1, mitochondrial</fullName>
        <ecNumber>1.-.-.-</ecNumber>
    </recommendedName>
</protein>
<evidence type="ECO:0000250" key="1"/>
<evidence type="ECO:0000250" key="2">
    <source>
        <dbReference type="UniProtKB" id="Q26710"/>
    </source>
</evidence>
<evidence type="ECO:0000255" key="3"/>
<evidence type="ECO:0000256" key="4">
    <source>
        <dbReference type="SAM" id="MobiDB-lite"/>
    </source>
</evidence>
<evidence type="ECO:0000305" key="5"/>
<proteinExistence type="inferred from homology"/>
<keyword id="KW-0249">Electron transport</keyword>
<keyword id="KW-0408">Iron</keyword>
<keyword id="KW-0472">Membrane</keyword>
<keyword id="KW-0479">Metal-binding</keyword>
<keyword id="KW-0496">Mitochondrion</keyword>
<keyword id="KW-0999">Mitochondrion inner membrane</keyword>
<keyword id="KW-0560">Oxidoreductase</keyword>
<keyword id="KW-0679">Respiratory chain</keyword>
<keyword id="KW-0809">Transit peptide</keyword>
<keyword id="KW-0812">Transmembrane</keyword>
<keyword id="KW-1133">Transmembrane helix</keyword>
<keyword id="KW-0813">Transport</keyword>
<name>AOX1_CANAX</name>
<sequence length="379" mass="43975">MIGLSTYRNLPTLLTTTTVISTALRSKQLLRFTTTTSTKSRSSTSTAATTVGNSNPKSPIDEDNLEKPGTIPTKHKPFNIQTEVYNKAGIEANDDDKFLTKPTYRHEDFTEAGVYRVHVTHRPPRTIGDKISCYGTLFFRKCFDLVTGYAVPDPDKPDQYKGTRWEMTEEKWMTRCIFLESIAGVPGSVAGFVRHLHSLRMLTRDKAWIETLHDEAYNERMHLLTFIKIGKPSWFTRSIIYIGQGVFTNIFFLVYLMNPRYCHRFVGYLEEEAVRTYTHLIDELDDPNKLPDFQKLPIPNIAVQYWPELTPESSFKDLILRIRADEAKHREINHTFANLEQWQDRNPFALKIKDSDKPQPNYNLDVTRPQGWERKDLYL</sequence>
<organism>
    <name type="scientific">Candida albicans</name>
    <name type="common">Yeast</name>
    <dbReference type="NCBI Taxonomy" id="5476"/>
    <lineage>
        <taxon>Eukaryota</taxon>
        <taxon>Fungi</taxon>
        <taxon>Dikarya</taxon>
        <taxon>Ascomycota</taxon>
        <taxon>Saccharomycotina</taxon>
        <taxon>Pichiomycetes</taxon>
        <taxon>Debaryomycetaceae</taxon>
        <taxon>Candida/Lodderomyces clade</taxon>
        <taxon>Candida</taxon>
    </lineage>
</organism>